<accession>B8E0Z4</accession>
<gene>
    <name evidence="1" type="primary">aroK</name>
    <name type="ordered locus">Dtur_1457</name>
</gene>
<reference key="1">
    <citation type="journal article" date="2016" name="Front. Microbiol.">
        <title>The complete genome sequence of hyperthermophile Dictyoglomus turgidum DSM 6724 reveals a specialized carbohydrate fermentor.</title>
        <authorList>
            <person name="Brumm P.J."/>
            <person name="Gowda K."/>
            <person name="Robb F.T."/>
            <person name="Mead D.A."/>
        </authorList>
    </citation>
    <scope>NUCLEOTIDE SEQUENCE [LARGE SCALE GENOMIC DNA]</scope>
    <source>
        <strain>DSM 6724 / Z-1310</strain>
    </source>
</reference>
<name>AROK_DICTD</name>
<dbReference type="EC" id="2.7.1.71" evidence="1"/>
<dbReference type="EMBL" id="CP001251">
    <property type="protein sequence ID" value="ACK42731.1"/>
    <property type="molecule type" value="Genomic_DNA"/>
</dbReference>
<dbReference type="RefSeq" id="WP_012583809.1">
    <property type="nucleotide sequence ID" value="NC_011661.1"/>
</dbReference>
<dbReference type="RefSeq" id="YP_002353345.1">
    <property type="nucleotide sequence ID" value="NC_011661.1"/>
</dbReference>
<dbReference type="SMR" id="B8E0Z4"/>
<dbReference type="FunCoup" id="B8E0Z4">
    <property type="interactions" value="349"/>
</dbReference>
<dbReference type="STRING" id="515635.Dtur_1457"/>
<dbReference type="EnsemblBacteria" id="ACK42731">
    <property type="protein sequence ID" value="ACK42731"/>
    <property type="gene ID" value="Dtur_1457"/>
</dbReference>
<dbReference type="KEGG" id="dtu:Dtur_1457"/>
<dbReference type="PATRIC" id="fig|515635.4.peg.1507"/>
<dbReference type="eggNOG" id="COG0703">
    <property type="taxonomic scope" value="Bacteria"/>
</dbReference>
<dbReference type="HOGENOM" id="CLU_057607_4_3_0"/>
<dbReference type="InParanoid" id="B8E0Z4"/>
<dbReference type="OrthoDB" id="9800332at2"/>
<dbReference type="UniPathway" id="UPA00053">
    <property type="reaction ID" value="UER00088"/>
</dbReference>
<dbReference type="Proteomes" id="UP000007719">
    <property type="component" value="Chromosome"/>
</dbReference>
<dbReference type="GO" id="GO:0005829">
    <property type="term" value="C:cytosol"/>
    <property type="evidence" value="ECO:0000318"/>
    <property type="project" value="GO_Central"/>
</dbReference>
<dbReference type="GO" id="GO:0005524">
    <property type="term" value="F:ATP binding"/>
    <property type="evidence" value="ECO:0007669"/>
    <property type="project" value="UniProtKB-UniRule"/>
</dbReference>
<dbReference type="GO" id="GO:0000287">
    <property type="term" value="F:magnesium ion binding"/>
    <property type="evidence" value="ECO:0007669"/>
    <property type="project" value="UniProtKB-UniRule"/>
</dbReference>
<dbReference type="GO" id="GO:0004765">
    <property type="term" value="F:shikimate kinase activity"/>
    <property type="evidence" value="ECO:0000318"/>
    <property type="project" value="GO_Central"/>
</dbReference>
<dbReference type="GO" id="GO:0008652">
    <property type="term" value="P:amino acid biosynthetic process"/>
    <property type="evidence" value="ECO:0007669"/>
    <property type="project" value="UniProtKB-KW"/>
</dbReference>
<dbReference type="GO" id="GO:0009073">
    <property type="term" value="P:aromatic amino acid family biosynthetic process"/>
    <property type="evidence" value="ECO:0007669"/>
    <property type="project" value="UniProtKB-KW"/>
</dbReference>
<dbReference type="GO" id="GO:0009423">
    <property type="term" value="P:chorismate biosynthetic process"/>
    <property type="evidence" value="ECO:0007669"/>
    <property type="project" value="UniProtKB-UniRule"/>
</dbReference>
<dbReference type="CDD" id="cd00464">
    <property type="entry name" value="SK"/>
    <property type="match status" value="1"/>
</dbReference>
<dbReference type="Gene3D" id="3.40.50.300">
    <property type="entry name" value="P-loop containing nucleotide triphosphate hydrolases"/>
    <property type="match status" value="1"/>
</dbReference>
<dbReference type="HAMAP" id="MF_00109">
    <property type="entry name" value="Shikimate_kinase"/>
    <property type="match status" value="1"/>
</dbReference>
<dbReference type="InterPro" id="IPR027417">
    <property type="entry name" value="P-loop_NTPase"/>
</dbReference>
<dbReference type="InterPro" id="IPR031322">
    <property type="entry name" value="Shikimate/glucono_kinase"/>
</dbReference>
<dbReference type="InterPro" id="IPR000623">
    <property type="entry name" value="Shikimate_kinase/TSH1"/>
</dbReference>
<dbReference type="InterPro" id="IPR023000">
    <property type="entry name" value="Shikimate_kinase_CS"/>
</dbReference>
<dbReference type="PANTHER" id="PTHR21087">
    <property type="entry name" value="SHIKIMATE KINASE"/>
    <property type="match status" value="1"/>
</dbReference>
<dbReference type="PANTHER" id="PTHR21087:SF16">
    <property type="entry name" value="SHIKIMATE KINASE 1, CHLOROPLASTIC"/>
    <property type="match status" value="1"/>
</dbReference>
<dbReference type="Pfam" id="PF01202">
    <property type="entry name" value="SKI"/>
    <property type="match status" value="1"/>
</dbReference>
<dbReference type="PRINTS" id="PR01100">
    <property type="entry name" value="SHIKIMTKNASE"/>
</dbReference>
<dbReference type="SUPFAM" id="SSF52540">
    <property type="entry name" value="P-loop containing nucleoside triphosphate hydrolases"/>
    <property type="match status" value="1"/>
</dbReference>
<dbReference type="PROSITE" id="PS01128">
    <property type="entry name" value="SHIKIMATE_KINASE"/>
    <property type="match status" value="1"/>
</dbReference>
<organism>
    <name type="scientific">Dictyoglomus turgidum (strain DSM 6724 / Z-1310)</name>
    <dbReference type="NCBI Taxonomy" id="515635"/>
    <lineage>
        <taxon>Bacteria</taxon>
        <taxon>Pseudomonadati</taxon>
        <taxon>Dictyoglomota</taxon>
        <taxon>Dictyoglomia</taxon>
        <taxon>Dictyoglomales</taxon>
        <taxon>Dictyoglomaceae</taxon>
        <taxon>Dictyoglomus</taxon>
    </lineage>
</organism>
<protein>
    <recommendedName>
        <fullName evidence="1">Shikimate kinase</fullName>
        <shortName evidence="1">SK</shortName>
        <ecNumber evidence="1">2.7.1.71</ecNumber>
    </recommendedName>
</protein>
<comment type="function">
    <text evidence="1">Catalyzes the specific phosphorylation of the 3-hydroxyl group of shikimic acid using ATP as a cosubstrate.</text>
</comment>
<comment type="catalytic activity">
    <reaction evidence="1">
        <text>shikimate + ATP = 3-phosphoshikimate + ADP + H(+)</text>
        <dbReference type="Rhea" id="RHEA:13121"/>
        <dbReference type="ChEBI" id="CHEBI:15378"/>
        <dbReference type="ChEBI" id="CHEBI:30616"/>
        <dbReference type="ChEBI" id="CHEBI:36208"/>
        <dbReference type="ChEBI" id="CHEBI:145989"/>
        <dbReference type="ChEBI" id="CHEBI:456216"/>
        <dbReference type="EC" id="2.7.1.71"/>
    </reaction>
</comment>
<comment type="cofactor">
    <cofactor evidence="1">
        <name>Mg(2+)</name>
        <dbReference type="ChEBI" id="CHEBI:18420"/>
    </cofactor>
    <text evidence="1">Binds 1 Mg(2+) ion per subunit.</text>
</comment>
<comment type="pathway">
    <text evidence="1">Metabolic intermediate biosynthesis; chorismate biosynthesis; chorismate from D-erythrose 4-phosphate and phosphoenolpyruvate: step 5/7.</text>
</comment>
<comment type="subunit">
    <text evidence="1">Monomer.</text>
</comment>
<comment type="subcellular location">
    <subcellularLocation>
        <location evidence="1">Cytoplasm</location>
    </subcellularLocation>
</comment>
<comment type="similarity">
    <text evidence="1">Belongs to the shikimate kinase family.</text>
</comment>
<keyword id="KW-0028">Amino-acid biosynthesis</keyword>
<keyword id="KW-0057">Aromatic amino acid biosynthesis</keyword>
<keyword id="KW-0067">ATP-binding</keyword>
<keyword id="KW-0963">Cytoplasm</keyword>
<keyword id="KW-0418">Kinase</keyword>
<keyword id="KW-0460">Magnesium</keyword>
<keyword id="KW-0479">Metal-binding</keyword>
<keyword id="KW-0547">Nucleotide-binding</keyword>
<keyword id="KW-1185">Reference proteome</keyword>
<keyword id="KW-0808">Transferase</keyword>
<sequence>MRSSLSFVGFMGSGKTSIGKRISLFFNIPFLDLDEYIEKKLKKSISDIFIEKGEEYFRNIETESLREAFSLYPKIVLSTGGGVVLREENRRILREKSKVIYLKGEFENLMKHLENKEEHEKRPLLKKGREELYNLWKKRLPLYESCADIIVEVDNKDIDEITFEIIERLRDD</sequence>
<proteinExistence type="inferred from homology"/>
<feature type="chain" id="PRO_1000117459" description="Shikimate kinase">
    <location>
        <begin position="1"/>
        <end position="172"/>
    </location>
</feature>
<feature type="binding site" evidence="1">
    <location>
        <begin position="12"/>
        <end position="17"/>
    </location>
    <ligand>
        <name>ATP</name>
        <dbReference type="ChEBI" id="CHEBI:30616"/>
    </ligand>
</feature>
<feature type="binding site" evidence="1">
    <location>
        <position position="16"/>
    </location>
    <ligand>
        <name>Mg(2+)</name>
        <dbReference type="ChEBI" id="CHEBI:18420"/>
    </ligand>
</feature>
<feature type="binding site" evidence="1">
    <location>
        <position position="34"/>
    </location>
    <ligand>
        <name>substrate</name>
    </ligand>
</feature>
<feature type="binding site" evidence="1">
    <location>
        <position position="58"/>
    </location>
    <ligand>
        <name>substrate</name>
    </ligand>
</feature>
<feature type="binding site" evidence="1">
    <location>
        <position position="81"/>
    </location>
    <ligand>
        <name>substrate</name>
    </ligand>
</feature>
<feature type="binding site" evidence="1">
    <location>
        <position position="122"/>
    </location>
    <ligand>
        <name>ATP</name>
        <dbReference type="ChEBI" id="CHEBI:30616"/>
    </ligand>
</feature>
<feature type="binding site" evidence="1">
    <location>
        <position position="139"/>
    </location>
    <ligand>
        <name>substrate</name>
    </ligand>
</feature>
<evidence type="ECO:0000255" key="1">
    <source>
        <dbReference type="HAMAP-Rule" id="MF_00109"/>
    </source>
</evidence>